<keyword id="KW-0150">Chloroplast</keyword>
<keyword id="KW-0472">Membrane</keyword>
<keyword id="KW-0602">Photosynthesis</keyword>
<keyword id="KW-0604">Photosystem II</keyword>
<keyword id="KW-0934">Plastid</keyword>
<keyword id="KW-0674">Reaction center</keyword>
<keyword id="KW-0793">Thylakoid</keyword>
<keyword id="KW-0812">Transmembrane</keyword>
<keyword id="KW-1133">Transmembrane helix</keyword>
<gene>
    <name evidence="1" type="primary">psbL</name>
</gene>
<accession>Q6ENU9</accession>
<sequence length="38" mass="4497">MTQSNPNEQNVELNRTSLYWGLLLIFVLAVLFSNYFFN</sequence>
<proteinExistence type="inferred from homology"/>
<organism>
    <name type="scientific">Saccharum officinarum</name>
    <name type="common">Sugarcane</name>
    <dbReference type="NCBI Taxonomy" id="4547"/>
    <lineage>
        <taxon>Eukaryota</taxon>
        <taxon>Viridiplantae</taxon>
        <taxon>Streptophyta</taxon>
        <taxon>Embryophyta</taxon>
        <taxon>Tracheophyta</taxon>
        <taxon>Spermatophyta</taxon>
        <taxon>Magnoliopsida</taxon>
        <taxon>Liliopsida</taxon>
        <taxon>Poales</taxon>
        <taxon>Poaceae</taxon>
        <taxon>PACMAD clade</taxon>
        <taxon>Panicoideae</taxon>
        <taxon>Andropogonodae</taxon>
        <taxon>Andropogoneae</taxon>
        <taxon>Saccharinae</taxon>
        <taxon>Saccharum</taxon>
        <taxon>Saccharum officinarum species complex</taxon>
    </lineage>
</organism>
<comment type="function">
    <text evidence="1">One of the components of the core complex of photosystem II (PSII). PSII is a light-driven water:plastoquinone oxidoreductase that uses light energy to abstract electrons from H(2)O, generating O(2) and a proton gradient subsequently used for ATP formation. It consists of a core antenna complex that captures photons, and an electron transfer chain that converts photonic excitation into a charge separation. This subunit is found at the monomer-monomer interface and is required for correct PSII assembly and/or dimerization.</text>
</comment>
<comment type="subunit">
    <text evidence="1">PSII is composed of 1 copy each of membrane proteins PsbA, PsbB, PsbC, PsbD, PsbE, PsbF, PsbH, PsbI, PsbJ, PsbK, PsbL, PsbM, PsbT, PsbX, PsbY, PsbZ, Psb30/Ycf12, at least 3 peripheral proteins of the oxygen-evolving complex and a large number of cofactors. It forms dimeric complexes.</text>
</comment>
<comment type="subcellular location">
    <subcellularLocation>
        <location evidence="1">Plastid</location>
        <location evidence="1">Chloroplast thylakoid membrane</location>
        <topology evidence="1">Single-pass membrane protein</topology>
    </subcellularLocation>
</comment>
<comment type="similarity">
    <text evidence="1">Belongs to the PsbL family.</text>
</comment>
<protein>
    <recommendedName>
        <fullName evidence="1">Photosystem II reaction center protein L</fullName>
        <shortName evidence="1">PSII-L</shortName>
    </recommendedName>
</protein>
<geneLocation type="chloroplast"/>
<dbReference type="EMBL" id="AP006714">
    <property type="protein sequence ID" value="BAD27307.1"/>
    <property type="molecule type" value="Genomic_DNA"/>
</dbReference>
<dbReference type="RefSeq" id="YP_009389585.1">
    <property type="nucleotide sequence ID" value="NC_035224.1"/>
</dbReference>
<dbReference type="SMR" id="Q6ENU9"/>
<dbReference type="GeneID" id="33347817"/>
<dbReference type="GO" id="GO:0009535">
    <property type="term" value="C:chloroplast thylakoid membrane"/>
    <property type="evidence" value="ECO:0007669"/>
    <property type="project" value="UniProtKB-SubCell"/>
</dbReference>
<dbReference type="GO" id="GO:0009539">
    <property type="term" value="C:photosystem II reaction center"/>
    <property type="evidence" value="ECO:0007669"/>
    <property type="project" value="InterPro"/>
</dbReference>
<dbReference type="GO" id="GO:0015979">
    <property type="term" value="P:photosynthesis"/>
    <property type="evidence" value="ECO:0007669"/>
    <property type="project" value="UniProtKB-UniRule"/>
</dbReference>
<dbReference type="HAMAP" id="MF_01317">
    <property type="entry name" value="PSII_PsbL"/>
    <property type="match status" value="1"/>
</dbReference>
<dbReference type="InterPro" id="IPR003372">
    <property type="entry name" value="PSII_PsbL"/>
</dbReference>
<dbReference type="InterPro" id="IPR037266">
    <property type="entry name" value="PSII_PsbL_sf"/>
</dbReference>
<dbReference type="NCBIfam" id="NF001972">
    <property type="entry name" value="PRK00753.1"/>
    <property type="match status" value="1"/>
</dbReference>
<dbReference type="Pfam" id="PF02419">
    <property type="entry name" value="PsbL"/>
    <property type="match status" value="1"/>
</dbReference>
<dbReference type="SUPFAM" id="SSF161017">
    <property type="entry name" value="Photosystem II reaction center protein L, PsbL"/>
    <property type="match status" value="1"/>
</dbReference>
<reference key="1">
    <citation type="journal article" date="2004" name="DNA Res.">
        <title>Complete nucleotide sequence of the sugarcane (Saccharum officinarum) chloroplast genome: a comparative analysis of four monocot chloroplast genomes.</title>
        <authorList>
            <person name="Asano T."/>
            <person name="Tsudzuki T."/>
            <person name="Takahashi S."/>
            <person name="Shimada H."/>
            <person name="Kadowaki K."/>
        </authorList>
    </citation>
    <scope>NUCLEOTIDE SEQUENCE [LARGE SCALE GENOMIC DNA]</scope>
</reference>
<evidence type="ECO:0000255" key="1">
    <source>
        <dbReference type="HAMAP-Rule" id="MF_01317"/>
    </source>
</evidence>
<name>PSBL_SACOF</name>
<feature type="chain" id="PRO_0000219765" description="Photosystem II reaction center protein L">
    <location>
        <begin position="1"/>
        <end position="38"/>
    </location>
</feature>
<feature type="transmembrane region" description="Helical" evidence="1">
    <location>
        <begin position="17"/>
        <end position="37"/>
    </location>
</feature>